<accession>P0A3K4</accession>
<accession>P27149</accession>
<feature type="initiator methionine" description="Removed" evidence="1">
    <location>
        <position position="1"/>
    </location>
</feature>
<feature type="chain" id="PRO_0000095804" description="Translation initiation factor IF-1">
    <location>
        <begin position="2"/>
        <end position="72"/>
    </location>
</feature>
<feature type="domain" description="S1-like" evidence="2">
    <location>
        <begin position="2"/>
        <end position="72"/>
    </location>
</feature>
<evidence type="ECO:0000250" key="1"/>
<evidence type="ECO:0000255" key="2">
    <source>
        <dbReference type="HAMAP-Rule" id="MF_00075"/>
    </source>
</evidence>
<protein>
    <recommendedName>
        <fullName evidence="2">Translation initiation factor IF-1</fullName>
    </recommendedName>
</protein>
<organism>
    <name type="scientific">Lactococcus lactis subsp. lactis (strain IL1403)</name>
    <name type="common">Streptococcus lactis</name>
    <dbReference type="NCBI Taxonomy" id="272623"/>
    <lineage>
        <taxon>Bacteria</taxon>
        <taxon>Bacillati</taxon>
        <taxon>Bacillota</taxon>
        <taxon>Bacilli</taxon>
        <taxon>Lactobacillales</taxon>
        <taxon>Streptococcaceae</taxon>
        <taxon>Lactococcus</taxon>
    </lineage>
</organism>
<keyword id="KW-0963">Cytoplasm</keyword>
<keyword id="KW-0396">Initiation factor</keyword>
<keyword id="KW-0648">Protein biosynthesis</keyword>
<keyword id="KW-1185">Reference proteome</keyword>
<keyword id="KW-0694">RNA-binding</keyword>
<keyword id="KW-0699">rRNA-binding</keyword>
<dbReference type="EMBL" id="AE005176">
    <property type="protein sequence ID" value="AAK06170.1"/>
    <property type="molecule type" value="Genomic_DNA"/>
</dbReference>
<dbReference type="PIR" id="H86883">
    <property type="entry name" value="H86883"/>
</dbReference>
<dbReference type="RefSeq" id="NP_268229.1">
    <property type="nucleotide sequence ID" value="NC_002662.1"/>
</dbReference>
<dbReference type="RefSeq" id="WP_003130554.1">
    <property type="nucleotide sequence ID" value="NC_002662.1"/>
</dbReference>
<dbReference type="SMR" id="P0A3K4"/>
<dbReference type="PaxDb" id="272623-L0366"/>
<dbReference type="EnsemblBacteria" id="AAK06170">
    <property type="protein sequence ID" value="AAK06170"/>
    <property type="gene ID" value="L0366"/>
</dbReference>
<dbReference type="GeneID" id="89634424"/>
<dbReference type="KEGG" id="lla:L0366"/>
<dbReference type="PATRIC" id="fig|272623.7.peg.2231"/>
<dbReference type="eggNOG" id="COG0361">
    <property type="taxonomic scope" value="Bacteria"/>
</dbReference>
<dbReference type="HOGENOM" id="CLU_151267_1_0_9"/>
<dbReference type="OrthoDB" id="9803250at2"/>
<dbReference type="Proteomes" id="UP000002196">
    <property type="component" value="Chromosome"/>
</dbReference>
<dbReference type="GO" id="GO:0009986">
    <property type="term" value="C:cell surface"/>
    <property type="evidence" value="ECO:0000314"/>
    <property type="project" value="CAFA"/>
</dbReference>
<dbReference type="GO" id="GO:0005829">
    <property type="term" value="C:cytosol"/>
    <property type="evidence" value="ECO:0007669"/>
    <property type="project" value="TreeGrafter"/>
</dbReference>
<dbReference type="GO" id="GO:2001065">
    <property type="term" value="F:mannan binding"/>
    <property type="evidence" value="ECO:0000314"/>
    <property type="project" value="CAFA"/>
</dbReference>
<dbReference type="GO" id="GO:0043022">
    <property type="term" value="F:ribosome binding"/>
    <property type="evidence" value="ECO:0007669"/>
    <property type="project" value="UniProtKB-UniRule"/>
</dbReference>
<dbReference type="GO" id="GO:0019843">
    <property type="term" value="F:rRNA binding"/>
    <property type="evidence" value="ECO:0007669"/>
    <property type="project" value="UniProtKB-UniRule"/>
</dbReference>
<dbReference type="GO" id="GO:0003743">
    <property type="term" value="F:translation initiation factor activity"/>
    <property type="evidence" value="ECO:0007669"/>
    <property type="project" value="UniProtKB-UniRule"/>
</dbReference>
<dbReference type="CDD" id="cd04451">
    <property type="entry name" value="S1_IF1"/>
    <property type="match status" value="1"/>
</dbReference>
<dbReference type="FunFam" id="2.40.50.140:FF:000002">
    <property type="entry name" value="Translation initiation factor IF-1"/>
    <property type="match status" value="1"/>
</dbReference>
<dbReference type="Gene3D" id="2.40.50.140">
    <property type="entry name" value="Nucleic acid-binding proteins"/>
    <property type="match status" value="1"/>
</dbReference>
<dbReference type="HAMAP" id="MF_00075">
    <property type="entry name" value="IF_1"/>
    <property type="match status" value="1"/>
</dbReference>
<dbReference type="InterPro" id="IPR012340">
    <property type="entry name" value="NA-bd_OB-fold"/>
</dbReference>
<dbReference type="InterPro" id="IPR006196">
    <property type="entry name" value="RNA-binding_domain_S1_IF1"/>
</dbReference>
<dbReference type="InterPro" id="IPR003029">
    <property type="entry name" value="S1_domain"/>
</dbReference>
<dbReference type="InterPro" id="IPR004368">
    <property type="entry name" value="TIF_IF1"/>
</dbReference>
<dbReference type="NCBIfam" id="TIGR00008">
    <property type="entry name" value="infA"/>
    <property type="match status" value="1"/>
</dbReference>
<dbReference type="PANTHER" id="PTHR33370">
    <property type="entry name" value="TRANSLATION INITIATION FACTOR IF-1, CHLOROPLASTIC"/>
    <property type="match status" value="1"/>
</dbReference>
<dbReference type="PANTHER" id="PTHR33370:SF1">
    <property type="entry name" value="TRANSLATION INITIATION FACTOR IF-1, CHLOROPLASTIC"/>
    <property type="match status" value="1"/>
</dbReference>
<dbReference type="Pfam" id="PF01176">
    <property type="entry name" value="eIF-1a"/>
    <property type="match status" value="1"/>
</dbReference>
<dbReference type="SMART" id="SM00316">
    <property type="entry name" value="S1"/>
    <property type="match status" value="1"/>
</dbReference>
<dbReference type="SUPFAM" id="SSF50249">
    <property type="entry name" value="Nucleic acid-binding proteins"/>
    <property type="match status" value="1"/>
</dbReference>
<dbReference type="PROSITE" id="PS50832">
    <property type="entry name" value="S1_IF1_TYPE"/>
    <property type="match status" value="1"/>
</dbReference>
<name>IF1_LACLA</name>
<reference key="1">
    <citation type="journal article" date="2001" name="Genome Res.">
        <title>The complete genome sequence of the lactic acid bacterium Lactococcus lactis ssp. lactis IL1403.</title>
        <authorList>
            <person name="Bolotin A."/>
            <person name="Wincker P."/>
            <person name="Mauger S."/>
            <person name="Jaillon O."/>
            <person name="Malarme K."/>
            <person name="Weissenbach J."/>
            <person name="Ehrlich S.D."/>
            <person name="Sorokin A."/>
        </authorList>
    </citation>
    <scope>NUCLEOTIDE SEQUENCE [LARGE SCALE GENOMIC DNA]</scope>
    <source>
        <strain>IL1403</strain>
    </source>
</reference>
<comment type="function">
    <text evidence="2">One of the essential components for the initiation of protein synthesis. Stabilizes the binding of IF-2 and IF-3 on the 30S subunit to which N-formylmethionyl-tRNA(fMet) subsequently binds. Helps modulate mRNA selection, yielding the 30S pre-initiation complex (PIC). Upon addition of the 50S ribosomal subunit IF-1, IF-2 and IF-3 are released leaving the mature 70S translation initiation complex.</text>
</comment>
<comment type="subunit">
    <text evidence="2">Component of the 30S ribosomal translation pre-initiation complex which assembles on the 30S ribosome in the order IF-2 and IF-3, IF-1 and N-formylmethionyl-tRNA(fMet); mRNA recruitment can occur at any time during PIC assembly.</text>
</comment>
<comment type="subcellular location">
    <subcellularLocation>
        <location evidence="2">Cytoplasm</location>
    </subcellularLocation>
</comment>
<comment type="similarity">
    <text evidence="2">Belongs to the IF-1 family.</text>
</comment>
<sequence>MAKDDVIEVDGKVVDTMPNAMFTVELENGHQVLATISGKIRKNYIRILPGDKVQVELSPYDLTRGRITYRFK</sequence>
<proteinExistence type="inferred from homology"/>
<gene>
    <name evidence="2" type="primary">infA</name>
    <name type="ordered locus">LL2072</name>
    <name type="ORF">L0366</name>
</gene>